<evidence type="ECO:0000250" key="1">
    <source>
        <dbReference type="UniProtKB" id="Q65158"/>
    </source>
</evidence>
<evidence type="ECO:0000255" key="2"/>
<evidence type="ECO:0000305" key="3"/>
<gene>
    <name type="ordered locus">Mal-074</name>
</gene>
<organismHost>
    <name type="scientific">Ornithodoros</name>
    <name type="common">relapsing fever ticks</name>
    <dbReference type="NCBI Taxonomy" id="6937"/>
</organismHost>
<organismHost>
    <name type="scientific">Phacochoerus aethiopicus</name>
    <name type="common">Warthog</name>
    <dbReference type="NCBI Taxonomy" id="85517"/>
</organismHost>
<organismHost>
    <name type="scientific">Phacochoerus africanus</name>
    <name type="common">Warthog</name>
    <dbReference type="NCBI Taxonomy" id="41426"/>
</organismHost>
<organismHost>
    <name type="scientific">Potamochoerus larvatus</name>
    <name type="common">Bushpig</name>
    <dbReference type="NCBI Taxonomy" id="273792"/>
</organismHost>
<organismHost>
    <name type="scientific">Sus scrofa</name>
    <name type="common">Pig</name>
    <dbReference type="NCBI Taxonomy" id="9823"/>
</organismHost>
<protein>
    <recommendedName>
        <fullName>Transmembrane protein C257L</fullName>
        <shortName>pC257L</shortName>
    </recommendedName>
</protein>
<feature type="chain" id="PRO_0000373616" description="Transmembrane protein C257L">
    <location>
        <begin position="1"/>
        <end position="257"/>
    </location>
</feature>
<feature type="transmembrane region" description="Helical" evidence="2">
    <location>
        <begin position="123"/>
        <end position="143"/>
    </location>
</feature>
<feature type="transmembrane region" description="Helical" evidence="2">
    <location>
        <begin position="163"/>
        <end position="183"/>
    </location>
</feature>
<reference key="1">
    <citation type="submission" date="2003-03" db="EMBL/GenBank/DDBJ databases">
        <title>African swine fever virus genomes.</title>
        <authorList>
            <person name="Kutish G.F."/>
            <person name="Rock D.L."/>
        </authorList>
    </citation>
    <scope>NUCLEOTIDE SEQUENCE [LARGE SCALE GENOMIC DNA]</scope>
</reference>
<proteinExistence type="inferred from homology"/>
<organism>
    <name type="scientific">African swine fever virus (isolate Tick/Malawi/Lil 20-1/1983)</name>
    <name type="common">ASFV</name>
    <dbReference type="NCBI Taxonomy" id="10500"/>
    <lineage>
        <taxon>Viruses</taxon>
        <taxon>Varidnaviria</taxon>
        <taxon>Bamfordvirae</taxon>
        <taxon>Nucleocytoviricota</taxon>
        <taxon>Pokkesviricetes</taxon>
        <taxon>Asfuvirales</taxon>
        <taxon>Asfarviridae</taxon>
        <taxon>Asfivirus</taxon>
        <taxon>African swine fever virus</taxon>
    </lineage>
</organism>
<sequence>MYSVCDVVRDAVAQSHLCACPNDKLPQCKGVTKAPPECSVFHLAKLQDTKFKWKYTLDPLKAQKLDQINKDIEKDAITLKLIYGTELSPEDVEWWKMQRCLINKNTGAKGGQFAHKYLERQDLELLGYSPTSLIGGDLMFTALPDKVLRTIPVVWDRFLNPAMMIFFLIILLCIILGIFYVLVRNTLRRKQKSKQHQMEIKRFIKEKEQDPYIHTSFESWPADPNKEWKELIPVYEAQGYCMADYRKKLGMPPVPNC</sequence>
<name>VF257_ASFM2</name>
<comment type="subcellular location">
    <subcellularLocation>
        <location evidence="3">Host membrane</location>
        <topology evidence="3">Multi-pass membrane protein</topology>
    </subcellularLocation>
    <subcellularLocation>
        <location evidence="1">Virion</location>
    </subcellularLocation>
</comment>
<comment type="induction">
    <text evidence="1">Expressed in the late phase of the viral replicative cycle.</text>
</comment>
<comment type="similarity">
    <text evidence="3">Belongs to the asfivirus C257R family.</text>
</comment>
<accession>P0CAB8</accession>
<keyword id="KW-1043">Host membrane</keyword>
<keyword id="KW-0426">Late protein</keyword>
<keyword id="KW-0472">Membrane</keyword>
<keyword id="KW-0812">Transmembrane</keyword>
<keyword id="KW-1133">Transmembrane helix</keyword>
<keyword id="KW-0946">Virion</keyword>
<dbReference type="EMBL" id="AY261361">
    <property type="status" value="NOT_ANNOTATED_CDS"/>
    <property type="molecule type" value="Genomic_DNA"/>
</dbReference>
<dbReference type="SMR" id="P0CAB8"/>
<dbReference type="Proteomes" id="UP000000860">
    <property type="component" value="Segment"/>
</dbReference>
<dbReference type="GO" id="GO:0033644">
    <property type="term" value="C:host cell membrane"/>
    <property type="evidence" value="ECO:0007669"/>
    <property type="project" value="UniProtKB-SubCell"/>
</dbReference>
<dbReference type="GO" id="GO:0016020">
    <property type="term" value="C:membrane"/>
    <property type="evidence" value="ECO:0007669"/>
    <property type="project" value="UniProtKB-KW"/>
</dbReference>
<dbReference type="GO" id="GO:0044423">
    <property type="term" value="C:virion component"/>
    <property type="evidence" value="ECO:0007669"/>
    <property type="project" value="UniProtKB-KW"/>
</dbReference>